<name>TTLL4_MOUSE</name>
<dbReference type="EC" id="6.3.2.-" evidence="6 7 8 10"/>
<dbReference type="EMBL" id="AM690747">
    <property type="protein sequence ID" value="CAM84324.1"/>
    <property type="molecule type" value="mRNA"/>
</dbReference>
<dbReference type="EMBL" id="BC044790">
    <property type="protein sequence ID" value="AAH44790.1"/>
    <property type="molecule type" value="mRNA"/>
</dbReference>
<dbReference type="EMBL" id="BC085151">
    <property type="protein sequence ID" value="AAH85151.1"/>
    <property type="molecule type" value="mRNA"/>
</dbReference>
<dbReference type="EMBL" id="AK129075">
    <property type="protein sequence ID" value="BAC97885.1"/>
    <property type="molecule type" value="mRNA"/>
</dbReference>
<dbReference type="CCDS" id="CCDS15053.1"/>
<dbReference type="RefSeq" id="NP_001014974.1">
    <property type="nucleotide sequence ID" value="NM_001014974.2"/>
</dbReference>
<dbReference type="RefSeq" id="XP_006496287.1">
    <property type="nucleotide sequence ID" value="XM_006496224.3"/>
</dbReference>
<dbReference type="RefSeq" id="XP_006496288.1">
    <property type="nucleotide sequence ID" value="XM_006496225.2"/>
</dbReference>
<dbReference type="SMR" id="Q80UG8"/>
<dbReference type="BioGRID" id="212257">
    <property type="interactions" value="1"/>
</dbReference>
<dbReference type="FunCoup" id="Q80UG8">
    <property type="interactions" value="941"/>
</dbReference>
<dbReference type="STRING" id="10090.ENSMUSP00000037406"/>
<dbReference type="GlyGen" id="Q80UG8">
    <property type="glycosylation" value="1 site"/>
</dbReference>
<dbReference type="iPTMnet" id="Q80UG8"/>
<dbReference type="PhosphoSitePlus" id="Q80UG8"/>
<dbReference type="PaxDb" id="10090-ENSMUSP00000037406"/>
<dbReference type="ProteomicsDB" id="298017"/>
<dbReference type="Antibodypedia" id="34286">
    <property type="antibodies" value="127 antibodies from 23 providers"/>
</dbReference>
<dbReference type="DNASU" id="67534"/>
<dbReference type="Ensembl" id="ENSMUST00000042125.15">
    <property type="protein sequence ID" value="ENSMUSP00000037406.9"/>
    <property type="gene ID" value="ENSMUSG00000033257.15"/>
</dbReference>
<dbReference type="GeneID" id="67534"/>
<dbReference type="KEGG" id="mmu:67534"/>
<dbReference type="UCSC" id="uc007bmy.1">
    <property type="organism name" value="mouse"/>
</dbReference>
<dbReference type="AGR" id="MGI:1914784"/>
<dbReference type="CTD" id="9654"/>
<dbReference type="MGI" id="MGI:1914784">
    <property type="gene designation" value="Ttll4"/>
</dbReference>
<dbReference type="VEuPathDB" id="HostDB:ENSMUSG00000033257"/>
<dbReference type="eggNOG" id="KOG2156">
    <property type="taxonomic scope" value="Eukaryota"/>
</dbReference>
<dbReference type="GeneTree" id="ENSGT00940000157916"/>
<dbReference type="HOGENOM" id="CLU_007870_0_0_1"/>
<dbReference type="InParanoid" id="Q80UG8"/>
<dbReference type="OMA" id="HHMKSAS"/>
<dbReference type="OrthoDB" id="202825at2759"/>
<dbReference type="PhylomeDB" id="Q80UG8"/>
<dbReference type="TreeFam" id="TF313087"/>
<dbReference type="BRENDA" id="6.3.2.B24">
    <property type="organism ID" value="3474"/>
</dbReference>
<dbReference type="Reactome" id="R-MMU-8955332">
    <property type="pathway name" value="Carboxyterminal post-translational modifications of tubulin"/>
</dbReference>
<dbReference type="BioGRID-ORCS" id="67534">
    <property type="hits" value="4 hits in 78 CRISPR screens"/>
</dbReference>
<dbReference type="ChiTaRS" id="Ttll4">
    <property type="organism name" value="mouse"/>
</dbReference>
<dbReference type="PRO" id="PR:Q80UG8"/>
<dbReference type="Proteomes" id="UP000000589">
    <property type="component" value="Chromosome 1"/>
</dbReference>
<dbReference type="RNAct" id="Q80UG8">
    <property type="molecule type" value="protein"/>
</dbReference>
<dbReference type="Bgee" id="ENSMUSG00000033257">
    <property type="expression patterns" value="Expressed in dorsal pancreas and 224 other cell types or tissues"/>
</dbReference>
<dbReference type="ExpressionAtlas" id="Q80UG8">
    <property type="expression patterns" value="baseline and differential"/>
</dbReference>
<dbReference type="GO" id="GO:0097731">
    <property type="term" value="C:9+0 non-motile cilium"/>
    <property type="evidence" value="ECO:0000314"/>
    <property type="project" value="MGI"/>
</dbReference>
<dbReference type="GO" id="GO:0036064">
    <property type="term" value="C:ciliary basal body"/>
    <property type="evidence" value="ECO:0000314"/>
    <property type="project" value="MGI"/>
</dbReference>
<dbReference type="GO" id="GO:0005737">
    <property type="term" value="C:cytoplasm"/>
    <property type="evidence" value="ECO:0007669"/>
    <property type="project" value="UniProtKB-SubCell"/>
</dbReference>
<dbReference type="GO" id="GO:0005874">
    <property type="term" value="C:microtubule"/>
    <property type="evidence" value="ECO:0007669"/>
    <property type="project" value="UniProtKB-KW"/>
</dbReference>
<dbReference type="GO" id="GO:0005524">
    <property type="term" value="F:ATP binding"/>
    <property type="evidence" value="ECO:0007669"/>
    <property type="project" value="UniProtKB-KW"/>
</dbReference>
<dbReference type="GO" id="GO:0046872">
    <property type="term" value="F:metal ion binding"/>
    <property type="evidence" value="ECO:0007669"/>
    <property type="project" value="UniProtKB-KW"/>
</dbReference>
<dbReference type="GO" id="GO:0070739">
    <property type="term" value="F:protein-glutamic acid ligase activity"/>
    <property type="evidence" value="ECO:0000314"/>
    <property type="project" value="UniProtKB"/>
</dbReference>
<dbReference type="GO" id="GO:0106437">
    <property type="term" value="F:protein-glutamic acid ligase activity, initiating"/>
    <property type="evidence" value="ECO:0007669"/>
    <property type="project" value="RHEA"/>
</dbReference>
<dbReference type="GO" id="GO:0015631">
    <property type="term" value="F:tubulin binding"/>
    <property type="evidence" value="ECO:0000314"/>
    <property type="project" value="UniProtKB"/>
</dbReference>
<dbReference type="GO" id="GO:0070740">
    <property type="term" value="F:tubulin-glutamic acid ligase activity"/>
    <property type="evidence" value="ECO:0000314"/>
    <property type="project" value="UniProtKB"/>
</dbReference>
<dbReference type="GO" id="GO:0018200">
    <property type="term" value="P:peptidyl-glutamic acid modification"/>
    <property type="evidence" value="ECO:0000314"/>
    <property type="project" value="UniProtKB"/>
</dbReference>
<dbReference type="GO" id="GO:0018095">
    <property type="term" value="P:protein polyglutamylation"/>
    <property type="evidence" value="ECO:0000314"/>
    <property type="project" value="UniProtKB"/>
</dbReference>
<dbReference type="GO" id="GO:0120222">
    <property type="term" value="P:regulation of blastocyst development"/>
    <property type="evidence" value="ECO:0000315"/>
    <property type="project" value="MGI"/>
</dbReference>
<dbReference type="FunFam" id="3.30.470.20:FF:000009">
    <property type="entry name" value="tubulin polyglutamylase TTLL5 isoform X1"/>
    <property type="match status" value="1"/>
</dbReference>
<dbReference type="Gene3D" id="3.30.470.20">
    <property type="entry name" value="ATP-grasp fold, B domain"/>
    <property type="match status" value="1"/>
</dbReference>
<dbReference type="InterPro" id="IPR004344">
    <property type="entry name" value="TTL/TTLL_fam"/>
</dbReference>
<dbReference type="PANTHER" id="PTHR12241:SF162">
    <property type="entry name" value="TUBULIN MONOGLUTAMYLASE TTLL4"/>
    <property type="match status" value="1"/>
</dbReference>
<dbReference type="PANTHER" id="PTHR12241">
    <property type="entry name" value="TUBULIN POLYGLUTAMYLASE"/>
    <property type="match status" value="1"/>
</dbReference>
<dbReference type="Pfam" id="PF03133">
    <property type="entry name" value="TTL"/>
    <property type="match status" value="1"/>
</dbReference>
<dbReference type="SUPFAM" id="SSF56059">
    <property type="entry name" value="Glutathione synthetase ATP-binding domain-like"/>
    <property type="match status" value="1"/>
</dbReference>
<dbReference type="PROSITE" id="PS51221">
    <property type="entry name" value="TTL"/>
    <property type="match status" value="1"/>
</dbReference>
<accession>Q80UG8</accession>
<accession>A4Q9E6</accession>
<accession>Q5U4C4</accession>
<protein>
    <recommendedName>
        <fullName evidence="12">Tubulin monoglutamylase TTLL4</fullName>
        <ecNumber evidence="6 7 8 10">6.3.2.-</ecNumber>
    </recommendedName>
    <alternativeName>
        <fullName evidence="14">Protein monoglutamylase TTLL4</fullName>
    </alternativeName>
    <alternativeName>
        <fullName>Tubulin--tyrosine ligase-like protein 4</fullName>
    </alternativeName>
</protein>
<evidence type="ECO:0000250" key="1">
    <source>
        <dbReference type="UniProtKB" id="A4Q9E8"/>
    </source>
</evidence>
<evidence type="ECO:0000250" key="2">
    <source>
        <dbReference type="UniProtKB" id="Q14679"/>
    </source>
</evidence>
<evidence type="ECO:0000250" key="3">
    <source>
        <dbReference type="UniProtKB" id="Q6ZT98"/>
    </source>
</evidence>
<evidence type="ECO:0000255" key="4">
    <source>
        <dbReference type="PROSITE-ProRule" id="PRU00568"/>
    </source>
</evidence>
<evidence type="ECO:0000256" key="5">
    <source>
        <dbReference type="SAM" id="MobiDB-lite"/>
    </source>
</evidence>
<evidence type="ECO:0000269" key="6">
    <source>
    </source>
</evidence>
<evidence type="ECO:0000269" key="7">
    <source>
    </source>
</evidence>
<evidence type="ECO:0000269" key="8">
    <source>
    </source>
</evidence>
<evidence type="ECO:0000269" key="9">
    <source>
    </source>
</evidence>
<evidence type="ECO:0000269" key="10">
    <source>
    </source>
</evidence>
<evidence type="ECO:0000269" key="11">
    <source>
    </source>
</evidence>
<evidence type="ECO:0000303" key="12">
    <source>
    </source>
</evidence>
<evidence type="ECO:0000305" key="13"/>
<evidence type="ECO:0000305" key="14">
    <source>
    </source>
</evidence>
<evidence type="ECO:0000305" key="15">
    <source>
    </source>
</evidence>
<evidence type="ECO:0000305" key="16">
    <source>
    </source>
</evidence>
<evidence type="ECO:0000305" key="17">
    <source>
    </source>
</evidence>
<evidence type="ECO:0000312" key="18">
    <source>
        <dbReference type="MGI" id="MGI:1914784"/>
    </source>
</evidence>
<sequence length="1193" mass="132530">MASAGTEHYSIGLRRGNSFKQRHPSGTVSASPSEKPSEVKVWSQAHQQVKPIWKLEKKHVGTLSAGLGTSFLGVPSQPAYFLCPSTLCSSGTTAVIAGHSNPCYLQSLPNLFSNTLLYRRTNVRQKPYQQLESFCLRSSPSEKRSFSLPQKGLPVSVTANKATSSTVFPMAQPMATSPTDPYLSLAAAGENPSRKSLASAISGKIASPLSYKPMLNNNSFMRPNSTKVPLSQATDGLKPVSSPKIQPVSWHHSGGTGDCVPQPGDHKVPQNIATVLDDVTAPITPSIPSTLNISTASVTSSQCSQSNFRMEAHPCGLDENPDSQSATKEVHFTEAVRKLAEKGLEKMPRQGYQFEQACFVNPSFQWGLLNRSRRWKPLMGQRFPQEDIGLDSAILPGTSDTLGLDSTVFCTKRISIHLLASHVHGLNPSPACGSAVDPQVLGEDRAPVPPSSLQPLGVAEVATRLSSVHLDQPGKEPEEAKDLNSCTKGGGSATDLQPNQVEPEDTEDELGDGLEDSCSHDENEEEEGDSECSSLSVVSPSESVALISRNCVDLMSKSLPNHEKVVRPALIYSLFPNVTPTIYFGTRDERVEKLPWEQRRLLRWKMSTVTPNIVKQTIGRSHFKISKRNDDWLGCWGHHMKSPGFRSIREHQKLNHFPGSFQIGRKDRLWRNLSRMQSRFGKKEFSFFPQSFILPQDSKLLRKAWESSSRQKWIVKPPASARGIGIQVIHKWSQLPKRRPLLVQRYLHKPYLISGSKFDLRIYVYVTSYDPLRIYLFSDGLVRFASCKYSPSMKSLSNKFMHLTNYSVNKKNTEYQANADETACQGHKWALKALWNYLSQKGINSDAIWEKIKDVVVKTIISSEPYVTNLLKLYVRRPYSCHELFGFDIMLDENLKPWVLEVNISPSLHSNSPLDISIKGQMIRDLLNLAGFVLPNMEDIISSSSSPSSSSGSSTSLPSSPRDKCQMTPEHFTAQKMKKAYYLTQKIPDQDFYASVLDVLTPDDVRVLVEMEDEFSRRGQFERIFPSRISSRYLRFFEQPRYFNILTTQWEQKYHGNKLKGVDLLRNWCYKGFHTGIVSDSAPLWSLPTSLMTTSKGDGTPNSASKSRKKSASEGTTLSSEDRSTPKSKKSQAGLSPISRKTLSSRSNENTSKQSKRSTPGLPVLKYSGQSSRLSAASASQSVTDSRLTAVSS</sequence>
<keyword id="KW-0067">ATP-binding</keyword>
<keyword id="KW-0966">Cell projection</keyword>
<keyword id="KW-0969">Cilium</keyword>
<keyword id="KW-0963">Cytoplasm</keyword>
<keyword id="KW-0206">Cytoskeleton</keyword>
<keyword id="KW-0436">Ligase</keyword>
<keyword id="KW-0460">Magnesium</keyword>
<keyword id="KW-0479">Metal-binding</keyword>
<keyword id="KW-0493">Microtubule</keyword>
<keyword id="KW-0547">Nucleotide-binding</keyword>
<keyword id="KW-0597">Phosphoprotein</keyword>
<keyword id="KW-1185">Reference proteome</keyword>
<organism>
    <name type="scientific">Mus musculus</name>
    <name type="common">Mouse</name>
    <dbReference type="NCBI Taxonomy" id="10090"/>
    <lineage>
        <taxon>Eukaryota</taxon>
        <taxon>Metazoa</taxon>
        <taxon>Chordata</taxon>
        <taxon>Craniata</taxon>
        <taxon>Vertebrata</taxon>
        <taxon>Euteleostomi</taxon>
        <taxon>Mammalia</taxon>
        <taxon>Eutheria</taxon>
        <taxon>Euarchontoglires</taxon>
        <taxon>Glires</taxon>
        <taxon>Rodentia</taxon>
        <taxon>Myomorpha</taxon>
        <taxon>Muroidea</taxon>
        <taxon>Muridae</taxon>
        <taxon>Murinae</taxon>
        <taxon>Mus</taxon>
        <taxon>Mus</taxon>
    </lineage>
</organism>
<comment type="function">
    <text evidence="6 7 8 10 11">Monoglutamylase which modifies both tubulin and non-tubulin proteins, adding a single glutamate on the gamma-carboxyl group of specific glutamate residues of target proteins (PubMed:17499049, PubMed:20530212, PubMed:21074048, PubMed:26829768). Involved in the side-chain initiation step of the polyglutamylation reaction but not in the elongation step (PubMed:17499049, PubMed:21074048). Preferentially modifies beta-tail tubulin over the alpha-tubulin (PubMed:17499049). Monoglutamylates nucleosome assembly proteins NAP1L1 and NAP1L4 (PubMed:17499049). Monoglutamylates nucleotidyltransferase CGAS, leading to inhibition of CGAS catalytic activity, thereby preventing antiviral defense function (PubMed:26829768). Involved in KLF4 glutamylation which impedes its ubiquitination, thereby leading to somatic cell reprogramming, pluripotency maintenance and embryogenesis (PubMed:29593216).</text>
</comment>
<comment type="catalytic activity">
    <reaction evidence="6 7 8 10">
        <text>L-glutamyl-[protein] + L-glutamate + ATP = gamma-L-glutamyl-L-glutamyl-[protein] + ADP + phosphate + H(+)</text>
        <dbReference type="Rhea" id="RHEA:60144"/>
        <dbReference type="Rhea" id="RHEA-COMP:10208"/>
        <dbReference type="Rhea" id="RHEA-COMP:15517"/>
        <dbReference type="ChEBI" id="CHEBI:15378"/>
        <dbReference type="ChEBI" id="CHEBI:29973"/>
        <dbReference type="ChEBI" id="CHEBI:29985"/>
        <dbReference type="ChEBI" id="CHEBI:30616"/>
        <dbReference type="ChEBI" id="CHEBI:43474"/>
        <dbReference type="ChEBI" id="CHEBI:143622"/>
        <dbReference type="ChEBI" id="CHEBI:456216"/>
    </reaction>
    <physiologicalReaction direction="left-to-right" evidence="14 15 16 17">
        <dbReference type="Rhea" id="RHEA:60145"/>
    </physiologicalReaction>
</comment>
<comment type="cofactor">
    <cofactor evidence="1">
        <name>Mg(2+)</name>
        <dbReference type="ChEBI" id="CHEBI:18420"/>
    </cofactor>
</comment>
<comment type="subcellular location">
    <subcellularLocation>
        <location evidence="10">Cytoplasm</location>
    </subcellularLocation>
    <subcellularLocation>
        <location evidence="6">Cell projection</location>
        <location evidence="6">Cilium</location>
    </subcellularLocation>
    <subcellularLocation>
        <location evidence="6">Cytoplasm</location>
        <location evidence="6">Cytoskeleton</location>
        <location evidence="6">Cilium basal body</location>
    </subcellularLocation>
    <text evidence="6">Located in cilia. In some cells, also found in basal bodies.</text>
</comment>
<comment type="tissue specificity">
    <text evidence="6 9 11">Highly expressed in testis (PubMed:17499049). Expressed in brain, heart, kidney, liver, lung, muscle and spleen (PubMed:17499049). In the brain, expressed in ependymal cilia, the cortex and the striatum (PubMed:23897886). Expressed in blastomere (PubMed:29593216).</text>
</comment>
<comment type="domain">
    <text evidence="2 3">The flexible c-MTBD (cationic microtubule binding domain) region mediates binding to microtubules. It is positively charged and becomes ordered when bound to microtubules: it interacts with a negatively charged patch on tubulin. The presence of positive charges in the c-MTBD region is essential for proper binding.</text>
</comment>
<comment type="domain">
    <text evidence="1">Arg-722 is the main determinant for regioselectivity, which segregates between initiases and elongases in all tubulin--tyrosine ligase family. A glutamine residue at this position is found in elongases TTLL6, TTLL9, TTLL11, TTLL13, TTLL10 and favors glutamate-chain elongation, whereas an arginine residue is found in initiases TTLL2, TTLL4, TTLL5, TTLL3, TTLL8 and favors initiation.</text>
</comment>
<comment type="disruption phenotype">
    <text evidence="11">Knockout mice show hypoglutamylation of KLF4 resulting in KLF4 proteasome-mediated degradation in early-stage embryos and impaired early embryonic development.</text>
</comment>
<comment type="similarity">
    <text evidence="13">Belongs to the tubulin--tyrosine ligase family.</text>
</comment>
<feature type="chain" id="PRO_0000212443" description="Tubulin monoglutamylase TTLL4">
    <location>
        <begin position="1"/>
        <end position="1193"/>
    </location>
</feature>
<feature type="domain" description="TTL" evidence="4">
    <location>
        <begin position="599"/>
        <end position="942"/>
    </location>
</feature>
<feature type="region of interest" description="Disordered" evidence="5">
    <location>
        <begin position="1"/>
        <end position="37"/>
    </location>
</feature>
<feature type="region of interest" description="Disordered" evidence="5">
    <location>
        <begin position="468"/>
        <end position="535"/>
    </location>
</feature>
<feature type="region of interest" description="c-MTBD region" evidence="2">
    <location>
        <begin position="913"/>
        <end position="1027"/>
    </location>
</feature>
<feature type="region of interest" description="Disordered" evidence="5">
    <location>
        <begin position="943"/>
        <end position="966"/>
    </location>
</feature>
<feature type="region of interest" description="Disordered" evidence="5">
    <location>
        <begin position="1092"/>
        <end position="1193"/>
    </location>
</feature>
<feature type="compositionally biased region" description="Polar residues" evidence="5">
    <location>
        <begin position="24"/>
        <end position="34"/>
    </location>
</feature>
<feature type="compositionally biased region" description="Basic and acidic residues" evidence="5">
    <location>
        <begin position="472"/>
        <end position="482"/>
    </location>
</feature>
<feature type="compositionally biased region" description="Acidic residues" evidence="5">
    <location>
        <begin position="502"/>
        <end position="515"/>
    </location>
</feature>
<feature type="compositionally biased region" description="Low complexity" evidence="5">
    <location>
        <begin position="943"/>
        <end position="960"/>
    </location>
</feature>
<feature type="compositionally biased region" description="Polar residues" evidence="5">
    <location>
        <begin position="1092"/>
        <end position="1102"/>
    </location>
</feature>
<feature type="compositionally biased region" description="Polar residues" evidence="5">
    <location>
        <begin position="1131"/>
        <end position="1153"/>
    </location>
</feature>
<feature type="compositionally biased region" description="Low complexity" evidence="5">
    <location>
        <begin position="1168"/>
        <end position="1182"/>
    </location>
</feature>
<feature type="compositionally biased region" description="Polar residues" evidence="5">
    <location>
        <begin position="1183"/>
        <end position="1193"/>
    </location>
</feature>
<feature type="binding site" evidence="1">
    <location>
        <position position="716"/>
    </location>
    <ligand>
        <name>ATP</name>
        <dbReference type="ChEBI" id="CHEBI:30616"/>
    </ligand>
</feature>
<feature type="binding site" evidence="1">
    <location>
        <begin position="722"/>
        <end position="723"/>
    </location>
    <ligand>
        <name>ATP</name>
        <dbReference type="ChEBI" id="CHEBI:30616"/>
    </ligand>
</feature>
<feature type="binding site" evidence="1">
    <location>
        <position position="722"/>
    </location>
    <ligand>
        <name>a protein</name>
        <dbReference type="ChEBI" id="CHEBI:16541"/>
    </ligand>
    <ligandPart>
        <name>L-glutamate residue</name>
        <dbReference type="ChEBI" id="CHEBI:29973"/>
        <note>L-glutamate acceptor residue in protein target</note>
    </ligandPart>
</feature>
<feature type="binding site" evidence="1">
    <location>
        <begin position="744"/>
        <end position="747"/>
    </location>
    <ligand>
        <name>ATP</name>
        <dbReference type="ChEBI" id="CHEBI:30616"/>
    </ligand>
</feature>
<feature type="binding site" evidence="1">
    <location>
        <begin position="757"/>
        <end position="759"/>
    </location>
    <ligand>
        <name>ATP</name>
        <dbReference type="ChEBI" id="CHEBI:30616"/>
    </ligand>
</feature>
<feature type="binding site" evidence="1">
    <location>
        <position position="783"/>
    </location>
    <ligand>
        <name>L-glutamate</name>
        <dbReference type="ChEBI" id="CHEBI:29985"/>
    </ligand>
</feature>
<feature type="binding site" evidence="1">
    <location>
        <begin position="804"/>
        <end position="805"/>
    </location>
    <ligand>
        <name>ATP</name>
        <dbReference type="ChEBI" id="CHEBI:30616"/>
    </ligand>
</feature>
<feature type="binding site" evidence="1">
    <location>
        <position position="806"/>
    </location>
    <ligand>
        <name>L-glutamate</name>
        <dbReference type="ChEBI" id="CHEBI:29985"/>
    </ligand>
</feature>
<feature type="binding site" evidence="1">
    <location>
        <position position="807"/>
    </location>
    <ligand>
        <name>L-glutamate</name>
        <dbReference type="ChEBI" id="CHEBI:29985"/>
    </ligand>
</feature>
<feature type="binding site" evidence="1">
    <location>
        <position position="828"/>
    </location>
    <ligand>
        <name>L-glutamate</name>
        <dbReference type="ChEBI" id="CHEBI:29985"/>
    </ligand>
</feature>
<feature type="binding site" evidence="1">
    <location>
        <position position="888"/>
    </location>
    <ligand>
        <name>Mg(2+)</name>
        <dbReference type="ChEBI" id="CHEBI:18420"/>
        <label>1</label>
    </ligand>
</feature>
<feature type="binding site" evidence="1">
    <location>
        <position position="901"/>
    </location>
    <ligand>
        <name>Mg(2+)</name>
        <dbReference type="ChEBI" id="CHEBI:18420"/>
        <label>1</label>
    </ligand>
</feature>
<feature type="binding site" evidence="1">
    <location>
        <position position="901"/>
    </location>
    <ligand>
        <name>Mg(2+)</name>
        <dbReference type="ChEBI" id="CHEBI:18420"/>
        <label>2</label>
    </ligand>
</feature>
<feature type="binding site" evidence="1">
    <location>
        <position position="903"/>
    </location>
    <ligand>
        <name>Mg(2+)</name>
        <dbReference type="ChEBI" id="CHEBI:18420"/>
        <label>2</label>
    </ligand>
</feature>
<feature type="binding site" evidence="1">
    <location>
        <position position="919"/>
    </location>
    <ligand>
        <name>L-glutamate</name>
        <dbReference type="ChEBI" id="CHEBI:29985"/>
    </ligand>
</feature>
<feature type="site" description="Essential for specifying initiation versus elongation step of the polyglutamylase activity" evidence="1">
    <location>
        <position position="722"/>
    </location>
</feature>
<feature type="modified residue" description="Phosphoserine" evidence="2">
    <location>
        <position position="686"/>
    </location>
</feature>
<gene>
    <name evidence="18" type="primary">Ttll4</name>
    <name type="synonym">Kiaa0173</name>
</gene>
<proteinExistence type="evidence at protein level"/>
<reference key="1">
    <citation type="journal article" date="2007" name="Mol. Cell">
        <title>A targeted multienzyme mechanism for selective microtubule polyglutamylation.</title>
        <authorList>
            <person name="van Dijk J."/>
            <person name="Rogowski K."/>
            <person name="Miro J."/>
            <person name="Lacroix B."/>
            <person name="Edde B."/>
            <person name="Janke C."/>
        </authorList>
    </citation>
    <scope>NUCLEOTIDE SEQUENCE [MRNA]</scope>
    <scope>FUNCTION</scope>
    <scope>CATALYTIC ACTIVITY</scope>
    <scope>SUBCELLULAR LOCATION</scope>
    <scope>TISSUE SPECIFICITY</scope>
    <source>
        <strain>C57BL/6J</strain>
        <tissue>Testis</tissue>
    </source>
</reference>
<reference key="2">
    <citation type="journal article" date="2004" name="Genome Res.">
        <title>The status, quality, and expansion of the NIH full-length cDNA project: the Mammalian Gene Collection (MGC).</title>
        <authorList>
            <consortium name="The MGC Project Team"/>
        </authorList>
    </citation>
    <scope>NUCLEOTIDE SEQUENCE [LARGE SCALE MRNA]</scope>
    <source>
        <strain>129</strain>
        <strain>C57BL/6J</strain>
        <strain>FVB/N</strain>
        <tissue>Brain</tissue>
    </source>
</reference>
<reference key="3">
    <citation type="journal article" date="2003" name="DNA Res.">
        <title>Prediction of the coding sequences of mouse homologues of KIAA gene: III. The complete nucleotide sequences of 500 mouse KIAA-homologous cDNAs identified by screening of terminal sequences of cDNA clones randomly sampled from size-fractionated libraries.</title>
        <authorList>
            <person name="Okazaki N."/>
            <person name="Kikuno R."/>
            <person name="Ohara R."/>
            <person name="Inamoto S."/>
            <person name="Koseki H."/>
            <person name="Hiraoka S."/>
            <person name="Saga Y."/>
            <person name="Nagase T."/>
            <person name="Ohara O."/>
            <person name="Koga H."/>
        </authorList>
    </citation>
    <scope>NUCLEOTIDE SEQUENCE [LARGE SCALE MRNA] OF 877-1193</scope>
    <source>
        <tissue>Embryonic tail</tissue>
    </source>
</reference>
<reference key="4">
    <citation type="journal article" date="2010" name="Cell">
        <title>A family of protein-deglutamylating enzymes associated with neurodegeneration.</title>
        <authorList>
            <person name="Rogowski K."/>
            <person name="van Dijk J."/>
            <person name="Magiera M.M."/>
            <person name="Bosc C."/>
            <person name="Deloulme J.C."/>
            <person name="Bosson A."/>
            <person name="Peris L."/>
            <person name="Gold N.D."/>
            <person name="Lacroix B."/>
            <person name="Grau M.B."/>
            <person name="Bec N."/>
            <person name="Larroque C."/>
            <person name="Desagher S."/>
            <person name="Holzer M."/>
            <person name="Andrieux A."/>
            <person name="Moutin M.J."/>
            <person name="Janke C."/>
        </authorList>
    </citation>
    <scope>FUNCTION</scope>
    <scope>CATALYTIC ACTIVITY</scope>
</reference>
<reference key="5">
    <citation type="journal article" date="2010" name="J. Cell Biol.">
        <title>Tubulin polyglutamylation stimulates spastin-mediated microtubule severing.</title>
        <authorList>
            <person name="Lacroix B."/>
            <person name="van Dijk J."/>
            <person name="Gold N.D."/>
            <person name="Guizetti J."/>
            <person name="Aldrian-Herrada G."/>
            <person name="Rogowski K."/>
            <person name="Gerlich D.W."/>
            <person name="Janke C."/>
        </authorList>
    </citation>
    <scope>FUNCTION</scope>
    <scope>CATALYTIC ACTIVITY</scope>
</reference>
<reference key="6">
    <citation type="journal article" date="2013" name="J. Cell Biol.">
        <title>Tubulin glycylases and glutamylases have distinct functions in stabilization and motility of ependymal cilia.</title>
        <authorList>
            <person name="Bosch Grau M."/>
            <person name="Gonzalez Curto G."/>
            <person name="Rocha C."/>
            <person name="Magiera M.M."/>
            <person name="Marques Sousa P."/>
            <person name="Giordano T."/>
            <person name="Spassky N."/>
            <person name="Janke C."/>
        </authorList>
    </citation>
    <scope>TISSUE SPECIFICITY</scope>
</reference>
<reference key="7">
    <citation type="journal article" date="2016" name="Nat. Immunol.">
        <title>Glutamylation of the DNA sensor cGAS regulates its binding and synthase activity in antiviral immunity.</title>
        <authorList>
            <person name="Xia P."/>
            <person name="Ye B."/>
            <person name="Wang S."/>
            <person name="Zhu X."/>
            <person name="Du Y."/>
            <person name="Xiong Z."/>
            <person name="Tian Y."/>
            <person name="Fan Z."/>
        </authorList>
    </citation>
    <scope>FUNCTION</scope>
    <scope>CATALYTIC ACTIVITY</scope>
    <scope>SUBCELLULAR LOCATION</scope>
</reference>
<reference key="8">
    <citation type="journal article" date="2018" name="Nat. Commun.">
        <title>Klf4 glutamylation is required for cell reprogramming and early embryonic development in mice.</title>
        <authorList>
            <person name="Ye B."/>
            <person name="Liu B."/>
            <person name="Hao L."/>
            <person name="Zhu X."/>
            <person name="Yang L."/>
            <person name="Wang S."/>
            <person name="Xia P."/>
            <person name="Du Y."/>
            <person name="Meng S."/>
            <person name="Huang G."/>
            <person name="Qin X."/>
            <person name="Wang Y."/>
            <person name="Yan X."/>
            <person name="Li C."/>
            <person name="Hao J."/>
            <person name="Zhu P."/>
            <person name="He L."/>
            <person name="Tian Y."/>
            <person name="Fan Z."/>
        </authorList>
    </citation>
    <scope>FUNCTION</scope>
    <scope>TISSUE SPECIFICITY</scope>
    <scope>DISRUPTION PHENOTYPE</scope>
</reference>